<reference key="1">
    <citation type="journal article" date="2009" name="Genome Res.">
        <title>Comparative genomic analyses of the human fungal pathogens Coccidioides and their relatives.</title>
        <authorList>
            <person name="Sharpton T.J."/>
            <person name="Stajich J.E."/>
            <person name="Rounsley S.D."/>
            <person name="Gardner M.J."/>
            <person name="Wortman J.R."/>
            <person name="Jordar V.S."/>
            <person name="Maiti R."/>
            <person name="Kodira C.D."/>
            <person name="Neafsey D.E."/>
            <person name="Zeng Q."/>
            <person name="Hung C.-Y."/>
            <person name="McMahan C."/>
            <person name="Muszewska A."/>
            <person name="Grynberg M."/>
            <person name="Mandel M.A."/>
            <person name="Kellner E.M."/>
            <person name="Barker B.M."/>
            <person name="Galgiani J.N."/>
            <person name="Orbach M.J."/>
            <person name="Kirkland T.N."/>
            <person name="Cole G.T."/>
            <person name="Henn M.R."/>
            <person name="Birren B.W."/>
            <person name="Taylor J.W."/>
        </authorList>
    </citation>
    <scope>NUCLEOTIDE SEQUENCE [LARGE SCALE GENOMIC DNA]</scope>
    <source>
        <strain>RS</strain>
    </source>
</reference>
<reference key="2">
    <citation type="journal article" date="2010" name="Genome Res.">
        <title>Population genomic sequencing of Coccidioides fungi reveals recent hybridization and transposon control.</title>
        <authorList>
            <person name="Neafsey D.E."/>
            <person name="Barker B.M."/>
            <person name="Sharpton T.J."/>
            <person name="Stajich J.E."/>
            <person name="Park D.J."/>
            <person name="Whiston E."/>
            <person name="Hung C.-Y."/>
            <person name="McMahan C."/>
            <person name="White J."/>
            <person name="Sykes S."/>
            <person name="Heiman D."/>
            <person name="Young S."/>
            <person name="Zeng Q."/>
            <person name="Abouelleil A."/>
            <person name="Aftuck L."/>
            <person name="Bessette D."/>
            <person name="Brown A."/>
            <person name="FitzGerald M."/>
            <person name="Lui A."/>
            <person name="Macdonald J.P."/>
            <person name="Priest M."/>
            <person name="Orbach M.J."/>
            <person name="Galgiani J.N."/>
            <person name="Kirkland T.N."/>
            <person name="Cole G.T."/>
            <person name="Birren B.W."/>
            <person name="Henn M.R."/>
            <person name="Taylor J.W."/>
            <person name="Rounsley S.D."/>
        </authorList>
    </citation>
    <scope>GENOME REANNOTATION</scope>
    <source>
        <strain>RS</strain>
    </source>
</reference>
<proteinExistence type="inferred from homology"/>
<dbReference type="EMBL" id="GG704913">
    <property type="protein sequence ID" value="EAS28755.3"/>
    <property type="molecule type" value="Genomic_DNA"/>
</dbReference>
<dbReference type="RefSeq" id="XP_001240338.1">
    <property type="nucleotide sequence ID" value="XM_001240337.2"/>
</dbReference>
<dbReference type="SMR" id="Q1DQB2"/>
<dbReference type="STRING" id="246410.Q1DQB2"/>
<dbReference type="GeneID" id="4559852"/>
<dbReference type="KEGG" id="cim:CIMG_07501"/>
<dbReference type="VEuPathDB" id="FungiDB:CIMG_07501"/>
<dbReference type="InParanoid" id="Q1DQB2"/>
<dbReference type="OMA" id="FNDEHKG"/>
<dbReference type="OrthoDB" id="10267031at2759"/>
<dbReference type="Proteomes" id="UP000001261">
    <property type="component" value="Unassembled WGS sequence"/>
</dbReference>
<dbReference type="GO" id="GO:0016282">
    <property type="term" value="C:eukaryotic 43S preinitiation complex"/>
    <property type="evidence" value="ECO:0007669"/>
    <property type="project" value="UniProtKB-UniRule"/>
</dbReference>
<dbReference type="GO" id="GO:0033290">
    <property type="term" value="C:eukaryotic 48S preinitiation complex"/>
    <property type="evidence" value="ECO:0007669"/>
    <property type="project" value="UniProtKB-UniRule"/>
</dbReference>
<dbReference type="GO" id="GO:0071541">
    <property type="term" value="C:eukaryotic translation initiation factor 3 complex, eIF3m"/>
    <property type="evidence" value="ECO:0007669"/>
    <property type="project" value="UniProtKB-UniRule"/>
</dbReference>
<dbReference type="GO" id="GO:0003743">
    <property type="term" value="F:translation initiation factor activity"/>
    <property type="evidence" value="ECO:0007669"/>
    <property type="project" value="UniProtKB-UniRule"/>
</dbReference>
<dbReference type="GO" id="GO:0001732">
    <property type="term" value="P:formation of cytoplasmic translation initiation complex"/>
    <property type="evidence" value="ECO:0007669"/>
    <property type="project" value="UniProtKB-UniRule"/>
</dbReference>
<dbReference type="HAMAP" id="MF_03012">
    <property type="entry name" value="eIF3m"/>
    <property type="match status" value="1"/>
</dbReference>
<dbReference type="InterPro" id="IPR045237">
    <property type="entry name" value="COPS7/eIF3m"/>
</dbReference>
<dbReference type="InterPro" id="IPR027528">
    <property type="entry name" value="eIF3m"/>
</dbReference>
<dbReference type="InterPro" id="IPR040750">
    <property type="entry name" value="eIF3m_C_helix"/>
</dbReference>
<dbReference type="InterPro" id="IPR000717">
    <property type="entry name" value="PCI_dom"/>
</dbReference>
<dbReference type="PANTHER" id="PTHR15350">
    <property type="entry name" value="COP9 SIGNALOSOME COMPLEX SUBUNIT 7/DENDRITIC CELL PROTEIN GA17"/>
    <property type="match status" value="1"/>
</dbReference>
<dbReference type="PANTHER" id="PTHR15350:SF2">
    <property type="entry name" value="EUKARYOTIC TRANSLATION INITIATION FACTOR 3 SUBUNIT M"/>
    <property type="match status" value="1"/>
</dbReference>
<dbReference type="Pfam" id="PF18005">
    <property type="entry name" value="eIF3m_C_helix"/>
    <property type="match status" value="1"/>
</dbReference>
<dbReference type="Pfam" id="PF01399">
    <property type="entry name" value="PCI"/>
    <property type="match status" value="1"/>
</dbReference>
<dbReference type="SMART" id="SM00088">
    <property type="entry name" value="PINT"/>
    <property type="match status" value="1"/>
</dbReference>
<dbReference type="PROSITE" id="PS50250">
    <property type="entry name" value="PCI"/>
    <property type="match status" value="1"/>
</dbReference>
<accession>Q1DQB2</accession>
<accession>J3K447</accession>
<organism>
    <name type="scientific">Coccidioides immitis (strain RS)</name>
    <name type="common">Valley fever fungus</name>
    <dbReference type="NCBI Taxonomy" id="246410"/>
    <lineage>
        <taxon>Eukaryota</taxon>
        <taxon>Fungi</taxon>
        <taxon>Dikarya</taxon>
        <taxon>Ascomycota</taxon>
        <taxon>Pezizomycotina</taxon>
        <taxon>Eurotiomycetes</taxon>
        <taxon>Eurotiomycetidae</taxon>
        <taxon>Onygenales</taxon>
        <taxon>Onygenaceae</taxon>
        <taxon>Coccidioides</taxon>
    </lineage>
</organism>
<protein>
    <recommendedName>
        <fullName evidence="1">Eukaryotic translation initiation factor 3 subunit M</fullName>
        <shortName evidence="1">eIF3m</shortName>
    </recommendedName>
</protein>
<gene>
    <name type="ORF">CIMG_07501</name>
</gene>
<keyword id="KW-0963">Cytoplasm</keyword>
<keyword id="KW-0396">Initiation factor</keyword>
<keyword id="KW-0648">Protein biosynthesis</keyword>
<keyword id="KW-1185">Reference proteome</keyword>
<feature type="chain" id="PRO_0000366017" description="Eukaryotic translation initiation factor 3 subunit M">
    <location>
        <begin position="1"/>
        <end position="465"/>
    </location>
</feature>
<feature type="domain" description="PCI" evidence="2">
    <location>
        <begin position="215"/>
        <end position="383"/>
    </location>
</feature>
<feature type="region of interest" description="Disordered" evidence="3">
    <location>
        <begin position="429"/>
        <end position="465"/>
    </location>
</feature>
<feature type="compositionally biased region" description="Basic and acidic residues" evidence="3">
    <location>
        <begin position="433"/>
        <end position="448"/>
    </location>
</feature>
<feature type="compositionally biased region" description="Basic and acidic residues" evidence="3">
    <location>
        <begin position="455"/>
        <end position="465"/>
    </location>
</feature>
<sequence length="465" mass="50986">MAAPTNTLLIEGTFSELAEELAHYVDTIRKTQTEGSVHAEIAPALDKLREQEQSEEEPKPAQQQQILKERDEVLKKLVVASAALNAAPEKEITAAYNLVIHLVRQSSNPGMFLPRICAFLAKPFPSSPQHGPSIALSILSTIFNTLAPSDNSRYHVFLAILAVIRTTSSVMAFEALKTQLKNQLSSWIATWNLDEEDVEKLHLAVADAAKKAGDEEMSYNHVILALQAIPPSEASSNEARELAVRALISALTYPFVFDFTPLTSSDAIQNLRSAEPSLFELLEIFASDTLDAYEEFIKSTPLSSMHNLAESAEILQNKMRVLTLASLAASTPSRSLPYDSISNALRIPREDVEKWVIDTIRAGLVEGKLSQLKGEFLVHRATYRVFGERQWAEVQGRLMVWRRSLENVLGVIHSEKEKFVREGIAAANAAAESGREGGARGGAGERRRGGGGHQGPREVDLVGGD</sequence>
<name>EIF3M_COCIM</name>
<evidence type="ECO:0000255" key="1">
    <source>
        <dbReference type="HAMAP-Rule" id="MF_03012"/>
    </source>
</evidence>
<evidence type="ECO:0000255" key="2">
    <source>
        <dbReference type="PROSITE-ProRule" id="PRU01185"/>
    </source>
</evidence>
<evidence type="ECO:0000256" key="3">
    <source>
        <dbReference type="SAM" id="MobiDB-lite"/>
    </source>
</evidence>
<comment type="function">
    <text evidence="1">Component of the eukaryotic translation initiation factor 3 (eIF-3) complex, which is involved in protein synthesis of a specialized repertoire of mRNAs and, together with other initiation factors, stimulates binding of mRNA and methionyl-tRNAi to the 40S ribosome. The eIF-3 complex specifically targets and initiates translation of a subset of mRNAs involved in cell proliferation.</text>
</comment>
<comment type="subunit">
    <text evidence="1">Component of the eukaryotic translation initiation factor 3 (eIF-3) complex.</text>
</comment>
<comment type="subcellular location">
    <subcellularLocation>
        <location evidence="1">Cytoplasm</location>
    </subcellularLocation>
</comment>
<comment type="similarity">
    <text evidence="1">Belongs to the eIF-3 subunit M family.</text>
</comment>